<keyword id="KW-0030">Aminoacyl-tRNA synthetase</keyword>
<keyword id="KW-0067">ATP-binding</keyword>
<keyword id="KW-0963">Cytoplasm</keyword>
<keyword id="KW-0436">Ligase</keyword>
<keyword id="KW-0547">Nucleotide-binding</keyword>
<keyword id="KW-0648">Protein biosynthesis</keyword>
<comment type="function">
    <text evidence="1">Catalyzes the attachment of valine to tRNA(Val). As ValRS can inadvertently accommodate and process structurally similar amino acids such as threonine, to avoid such errors, it has a 'posttransfer' editing activity that hydrolyzes mischarged Thr-tRNA(Val) in a tRNA-dependent manner.</text>
</comment>
<comment type="catalytic activity">
    <reaction evidence="1">
        <text>tRNA(Val) + L-valine + ATP = L-valyl-tRNA(Val) + AMP + diphosphate</text>
        <dbReference type="Rhea" id="RHEA:10704"/>
        <dbReference type="Rhea" id="RHEA-COMP:9672"/>
        <dbReference type="Rhea" id="RHEA-COMP:9708"/>
        <dbReference type="ChEBI" id="CHEBI:30616"/>
        <dbReference type="ChEBI" id="CHEBI:33019"/>
        <dbReference type="ChEBI" id="CHEBI:57762"/>
        <dbReference type="ChEBI" id="CHEBI:78442"/>
        <dbReference type="ChEBI" id="CHEBI:78537"/>
        <dbReference type="ChEBI" id="CHEBI:456215"/>
        <dbReference type="EC" id="6.1.1.9"/>
    </reaction>
</comment>
<comment type="subunit">
    <text evidence="1">Monomer.</text>
</comment>
<comment type="subcellular location">
    <subcellularLocation>
        <location evidence="1">Cytoplasm</location>
    </subcellularLocation>
</comment>
<comment type="domain">
    <text evidence="1">ValRS has two distinct active sites: one for aminoacylation and one for editing. The misactivated threonine is translocated from the active site to the editing site.</text>
</comment>
<comment type="similarity">
    <text evidence="1">Belongs to the class-I aminoacyl-tRNA synthetase family. ValS type 2 subfamily.</text>
</comment>
<evidence type="ECO:0000255" key="1">
    <source>
        <dbReference type="HAMAP-Rule" id="MF_02005"/>
    </source>
</evidence>
<sequence>MNVRVRHFMQSLDSRYQHKTVEEECNAAWDEHKIYKWKGNVAQSFVIDTPPPTVSGVLHMGHVFSYCHTDFIARYQRMAGKDVFYPIGFDDNGLPTERLVEKIKKLRAVQLERAEFTKMCREVSHEFRTKFRNLFRRLGISYDWALEYHTVSEEVQRLSQASFLDLYAKDKLYRKQQPILWDTVDCTAIAHAEVEELDLHSHLNTISFHTVGGEKIDIATTRPELIPACVALFFNPEDDRYTHLHGQFAVVPVGGHKVKILPDDKVRIDKGTGLVMCCTFGDETDVYWWRTHNLDTKTIVSRTGHIVDLAEDTPDAKIPAAQFDGMHVQKARKAVCDALEGAGLLVSQEPIVHTVKCAERSGAPIEILLSHQWFVRVMEHKHELLEQVQKVQWHPDSMRKRMEIWIENLNWDWCISRQRYFGVPFPVWYSKREGEVGKVLLPDVRDLPVDPLRDLPSGYGRDEVEPDVDVMDTWATSSISPQFLTKSVGQVLRNENLEPLFPTDLRAQSHEIIRSWAFYTMLKSYYHNGEIPWQNIMISGWCLAEDKTKMSKSKGNAMDPESTLDLYGADSVRYWAAKSRLGADTVFSEEVLKTGRRLTTKLWNASKFVATFFLRDNPPAGTTAAPTDLWILSKLHKAVAHNTENLKLFEYCAALNRTEEFFWKDFCDNYLELVKHRAYNHGSAHGHASAVSTLHHTLKTLLLLFAPFLPYVTEAVYGTLFSGCIHAQEWPNADEIPYNASLEQHGDALIKIVEEVRKAKTHAQVSVKYPVELITIGGLATDFPESMLEDLKHMCCAEQIKLTAPDSTELEVAVTLAPTVSSN</sequence>
<accession>Q5P9M8</accession>
<dbReference type="EC" id="6.1.1.9" evidence="1"/>
<dbReference type="EMBL" id="CP000030">
    <property type="protein sequence ID" value="AAV87002.1"/>
    <property type="molecule type" value="Genomic_DNA"/>
</dbReference>
<dbReference type="SMR" id="Q5P9M8"/>
<dbReference type="KEGG" id="ama:AM1170"/>
<dbReference type="HOGENOM" id="CLU_001493_0_2_5"/>
<dbReference type="GO" id="GO:0005829">
    <property type="term" value="C:cytosol"/>
    <property type="evidence" value="ECO:0007669"/>
    <property type="project" value="TreeGrafter"/>
</dbReference>
<dbReference type="GO" id="GO:0002161">
    <property type="term" value="F:aminoacyl-tRNA deacylase activity"/>
    <property type="evidence" value="ECO:0007669"/>
    <property type="project" value="InterPro"/>
</dbReference>
<dbReference type="GO" id="GO:0005524">
    <property type="term" value="F:ATP binding"/>
    <property type="evidence" value="ECO:0007669"/>
    <property type="project" value="UniProtKB-UniRule"/>
</dbReference>
<dbReference type="GO" id="GO:0004832">
    <property type="term" value="F:valine-tRNA ligase activity"/>
    <property type="evidence" value="ECO:0007669"/>
    <property type="project" value="UniProtKB-UniRule"/>
</dbReference>
<dbReference type="GO" id="GO:0006438">
    <property type="term" value="P:valyl-tRNA aminoacylation"/>
    <property type="evidence" value="ECO:0007669"/>
    <property type="project" value="UniProtKB-UniRule"/>
</dbReference>
<dbReference type="CDD" id="cd07962">
    <property type="entry name" value="Anticodon_Ia_Val"/>
    <property type="match status" value="1"/>
</dbReference>
<dbReference type="FunFam" id="3.40.50.620:FF:000192">
    <property type="entry name" value="Valine--tRNA ligase"/>
    <property type="match status" value="1"/>
</dbReference>
<dbReference type="Gene3D" id="3.40.50.620">
    <property type="entry name" value="HUPs"/>
    <property type="match status" value="2"/>
</dbReference>
<dbReference type="Gene3D" id="1.10.730.10">
    <property type="entry name" value="Isoleucyl-tRNA Synthetase, Domain 1"/>
    <property type="match status" value="1"/>
</dbReference>
<dbReference type="Gene3D" id="3.90.740.10">
    <property type="entry name" value="Valyl/Leucyl/Isoleucyl-tRNA synthetase, editing domain"/>
    <property type="match status" value="1"/>
</dbReference>
<dbReference type="HAMAP" id="MF_02005">
    <property type="entry name" value="Val_tRNA_synth_type2"/>
    <property type="match status" value="1"/>
</dbReference>
<dbReference type="InterPro" id="IPR001412">
    <property type="entry name" value="aa-tRNA-synth_I_CS"/>
</dbReference>
<dbReference type="InterPro" id="IPR002300">
    <property type="entry name" value="aa-tRNA-synth_Ia"/>
</dbReference>
<dbReference type="InterPro" id="IPR033705">
    <property type="entry name" value="Anticodon_Ia_Val"/>
</dbReference>
<dbReference type="InterPro" id="IPR013155">
    <property type="entry name" value="M/V/L/I-tRNA-synth_anticd-bd"/>
</dbReference>
<dbReference type="InterPro" id="IPR014729">
    <property type="entry name" value="Rossmann-like_a/b/a_fold"/>
</dbReference>
<dbReference type="InterPro" id="IPR009080">
    <property type="entry name" value="tRNAsynth_Ia_anticodon-bd"/>
</dbReference>
<dbReference type="InterPro" id="IPR009008">
    <property type="entry name" value="Val/Leu/Ile-tRNA-synth_edit"/>
</dbReference>
<dbReference type="InterPro" id="IPR022874">
    <property type="entry name" value="Valine-tRNA_ligase_type_2"/>
</dbReference>
<dbReference type="InterPro" id="IPR002303">
    <property type="entry name" value="Valyl-tRNA_ligase"/>
</dbReference>
<dbReference type="NCBIfam" id="NF009687">
    <property type="entry name" value="PRK13208.1"/>
    <property type="match status" value="1"/>
</dbReference>
<dbReference type="NCBIfam" id="TIGR00422">
    <property type="entry name" value="valS"/>
    <property type="match status" value="1"/>
</dbReference>
<dbReference type="PANTHER" id="PTHR11946:SF93">
    <property type="entry name" value="VALINE--TRNA LIGASE, CHLOROPLASTIC_MITOCHONDRIAL 2"/>
    <property type="match status" value="1"/>
</dbReference>
<dbReference type="PANTHER" id="PTHR11946">
    <property type="entry name" value="VALYL-TRNA SYNTHETASES"/>
    <property type="match status" value="1"/>
</dbReference>
<dbReference type="Pfam" id="PF08264">
    <property type="entry name" value="Anticodon_1"/>
    <property type="match status" value="1"/>
</dbReference>
<dbReference type="Pfam" id="PF00133">
    <property type="entry name" value="tRNA-synt_1"/>
    <property type="match status" value="1"/>
</dbReference>
<dbReference type="PRINTS" id="PR00986">
    <property type="entry name" value="TRNASYNTHVAL"/>
</dbReference>
<dbReference type="SUPFAM" id="SSF47323">
    <property type="entry name" value="Anticodon-binding domain of a subclass of class I aminoacyl-tRNA synthetases"/>
    <property type="match status" value="1"/>
</dbReference>
<dbReference type="SUPFAM" id="SSF52374">
    <property type="entry name" value="Nucleotidylyl transferase"/>
    <property type="match status" value="1"/>
</dbReference>
<dbReference type="SUPFAM" id="SSF50677">
    <property type="entry name" value="ValRS/IleRS/LeuRS editing domain"/>
    <property type="match status" value="1"/>
</dbReference>
<dbReference type="PROSITE" id="PS00178">
    <property type="entry name" value="AA_TRNA_LIGASE_I"/>
    <property type="match status" value="1"/>
</dbReference>
<name>SYV_ANAMM</name>
<protein>
    <recommendedName>
        <fullName evidence="1">Valine--tRNA ligase</fullName>
        <ecNumber evidence="1">6.1.1.9</ecNumber>
    </recommendedName>
    <alternativeName>
        <fullName evidence="1">Valyl-tRNA synthetase</fullName>
        <shortName evidence="1">ValRS</shortName>
    </alternativeName>
</protein>
<organism>
    <name type="scientific">Anaplasma marginale (strain St. Maries)</name>
    <dbReference type="NCBI Taxonomy" id="234826"/>
    <lineage>
        <taxon>Bacteria</taxon>
        <taxon>Pseudomonadati</taxon>
        <taxon>Pseudomonadota</taxon>
        <taxon>Alphaproteobacteria</taxon>
        <taxon>Rickettsiales</taxon>
        <taxon>Anaplasmataceae</taxon>
        <taxon>Anaplasma</taxon>
    </lineage>
</organism>
<gene>
    <name evidence="1" type="primary">valS</name>
    <name type="ordered locus">AM1170</name>
</gene>
<proteinExistence type="inferred from homology"/>
<feature type="chain" id="PRO_0000224606" description="Valine--tRNA ligase">
    <location>
        <begin position="1"/>
        <end position="823"/>
    </location>
</feature>
<feature type="short sequence motif" description="'HIGH' region">
    <location>
        <begin position="52"/>
        <end position="62"/>
    </location>
</feature>
<feature type="short sequence motif" description="'KMSKS' region">
    <location>
        <begin position="549"/>
        <end position="553"/>
    </location>
</feature>
<feature type="binding site" evidence="1">
    <location>
        <position position="552"/>
    </location>
    <ligand>
        <name>ATP</name>
        <dbReference type="ChEBI" id="CHEBI:30616"/>
    </ligand>
</feature>
<reference key="1">
    <citation type="journal article" date="2005" name="Proc. Natl. Acad. Sci. U.S.A.">
        <title>Complete genome sequencing of Anaplasma marginale reveals that the surface is skewed to two superfamilies of outer membrane proteins.</title>
        <authorList>
            <person name="Brayton K.A."/>
            <person name="Kappmeyer L.S."/>
            <person name="Herndon D.R."/>
            <person name="Dark M.J."/>
            <person name="Tibbals D.L."/>
            <person name="Palmer G.H."/>
            <person name="McGuire T.C."/>
            <person name="Knowles D.P. Jr."/>
        </authorList>
    </citation>
    <scope>NUCLEOTIDE SEQUENCE [LARGE SCALE GENOMIC DNA]</scope>
    <source>
        <strain>St. Maries</strain>
    </source>
</reference>